<dbReference type="EMBL" id="AF215055">
    <property type="protein sequence ID" value="AAG60483.1"/>
    <property type="molecule type" value="mRNA"/>
</dbReference>
<dbReference type="SMR" id="Q9BP83"/>
<dbReference type="ConoServer" id="742">
    <property type="toxin name" value="Ar6.13 precursor"/>
</dbReference>
<dbReference type="GO" id="GO:0005576">
    <property type="term" value="C:extracellular region"/>
    <property type="evidence" value="ECO:0007669"/>
    <property type="project" value="UniProtKB-SubCell"/>
</dbReference>
<dbReference type="GO" id="GO:0008200">
    <property type="term" value="F:ion channel inhibitor activity"/>
    <property type="evidence" value="ECO:0007669"/>
    <property type="project" value="InterPro"/>
</dbReference>
<dbReference type="GO" id="GO:0090729">
    <property type="term" value="F:toxin activity"/>
    <property type="evidence" value="ECO:0007669"/>
    <property type="project" value="UniProtKB-KW"/>
</dbReference>
<dbReference type="InterPro" id="IPR004214">
    <property type="entry name" value="Conotoxin"/>
</dbReference>
<dbReference type="Pfam" id="PF02950">
    <property type="entry name" value="Conotoxin"/>
    <property type="match status" value="1"/>
</dbReference>
<protein>
    <recommendedName>
        <fullName>Conotoxin ArMKLT2-0311</fullName>
    </recommendedName>
</protein>
<keyword id="KW-1015">Disulfide bond</keyword>
<keyword id="KW-0960">Knottin</keyword>
<keyword id="KW-0528">Neurotoxin</keyword>
<keyword id="KW-0964">Secreted</keyword>
<keyword id="KW-0732">Signal</keyword>
<keyword id="KW-0800">Toxin</keyword>
<reference key="1">
    <citation type="journal article" date="2001" name="Mol. Biol. Evol.">
        <title>Mechanisms for evolving hypervariability: the case of conopeptides.</title>
        <authorList>
            <person name="Conticello S.G."/>
            <person name="Gilad Y."/>
            <person name="Avidan N."/>
            <person name="Ben-Asher E."/>
            <person name="Levy Z."/>
            <person name="Fainzilber M."/>
        </authorList>
    </citation>
    <scope>NUCLEOTIDE SEQUENCE [MRNA]</scope>
    <source>
        <tissue>Venom duct</tissue>
    </source>
</reference>
<accession>Q9BP83</accession>
<comment type="subcellular location">
    <subcellularLocation>
        <location evidence="1">Secreted</location>
    </subcellularLocation>
</comment>
<comment type="tissue specificity">
    <text>Expressed by the venom duct.</text>
</comment>
<comment type="domain">
    <text evidence="1">The presence of a 'disulfide through disulfide knot' structurally defines this protein as a knottin.</text>
</comment>
<comment type="domain">
    <text>The cysteine framework is VI/VII (C-C-CC-C-C).</text>
</comment>
<comment type="similarity">
    <text evidence="4">Belongs to the conotoxin O1 superfamily.</text>
</comment>
<organism>
    <name type="scientific">Conus arenatus</name>
    <name type="common">Sand-dusted cone</name>
    <dbReference type="NCBI Taxonomy" id="89451"/>
    <lineage>
        <taxon>Eukaryota</taxon>
        <taxon>Metazoa</taxon>
        <taxon>Spiralia</taxon>
        <taxon>Lophotrochozoa</taxon>
        <taxon>Mollusca</taxon>
        <taxon>Gastropoda</taxon>
        <taxon>Caenogastropoda</taxon>
        <taxon>Neogastropoda</taxon>
        <taxon>Conoidea</taxon>
        <taxon>Conidae</taxon>
        <taxon>Conus</taxon>
    </lineage>
</organism>
<sequence>MKLTCVLIVALLFLTACQLTTADDSRDKQEDPLVRSHRKMQKSEDPKMAERCSNFGSDCIPATHDCCSGECFGFEDMGLCT</sequence>
<name>O1613_CONAE</name>
<proteinExistence type="evidence at transcript level"/>
<feature type="signal peptide" evidence="2">
    <location>
        <begin position="1"/>
        <end position="22"/>
    </location>
</feature>
<feature type="propeptide" id="PRO_0000404728" evidence="1">
    <location>
        <begin position="23"/>
        <end position="51"/>
    </location>
</feature>
<feature type="peptide" id="PRO_0000404729" description="Conotoxin ArMKLT2-0311">
    <location>
        <begin position="52"/>
        <end position="81"/>
    </location>
</feature>
<feature type="region of interest" description="Disordered" evidence="3">
    <location>
        <begin position="23"/>
        <end position="45"/>
    </location>
</feature>
<feature type="compositionally biased region" description="Basic and acidic residues" evidence="3">
    <location>
        <begin position="23"/>
        <end position="34"/>
    </location>
</feature>
<feature type="disulfide bond" evidence="1">
    <location>
        <begin position="52"/>
        <end position="67"/>
    </location>
</feature>
<feature type="disulfide bond" evidence="1">
    <location>
        <begin position="59"/>
        <end position="71"/>
    </location>
</feature>
<feature type="disulfide bond" evidence="1">
    <location>
        <begin position="66"/>
        <end position="80"/>
    </location>
</feature>
<evidence type="ECO:0000250" key="1"/>
<evidence type="ECO:0000255" key="2"/>
<evidence type="ECO:0000256" key="3">
    <source>
        <dbReference type="SAM" id="MobiDB-lite"/>
    </source>
</evidence>
<evidence type="ECO:0000305" key="4"/>